<feature type="chain" id="PRO_0000460363" description="NAD(+)-dependent homoserine dehydrogenase">
    <location>
        <begin position="1"/>
        <end position="352"/>
    </location>
</feature>
<reference key="1">
    <citation type="journal article" date="2022" name="RSC Chem. Biol.">
        <title>Canavanine utilization via homoserine and hydroxyguanidine by a PLP-dependent gamma-lyase in Pseudomonadaceae and Rhizobiales.</title>
        <authorList>
            <person name="Hauth F."/>
            <person name="Buck H."/>
            <person name="Stanoppi M."/>
            <person name="Hartig J.S."/>
        </authorList>
    </citation>
    <scope>NUCLEOTIDE SEQUENCE [LARGE SCALE GENOMIC DNA]</scope>
    <scope>FUNCTION</scope>
    <scope>CATALYTIC ACTIVITY</scope>
    <scope>INDUCTION</scope>
    <source>
        <strain>DSM 112525 / LMG 32336 / HB002</strain>
    </source>
</reference>
<proteinExistence type="evidence at protein level"/>
<organism>
    <name type="scientific">Pseudomonas canavaninivorans</name>
    <dbReference type="NCBI Taxonomy" id="2842348"/>
    <lineage>
        <taxon>Bacteria</taxon>
        <taxon>Pseudomonadati</taxon>
        <taxon>Pseudomonadota</taxon>
        <taxon>Gammaproteobacteria</taxon>
        <taxon>Pseudomonadales</taxon>
        <taxon>Pseudomonadaceae</taxon>
        <taxon>Pseudomonas</taxon>
    </lineage>
</organism>
<accession>P0DXC5</accession>
<keyword id="KW-0520">NAD</keyword>
<keyword id="KW-0560">Oxidoreductase</keyword>
<sequence length="352" mass="36859">MTEYKLALVGFGGVNRALAQLIAERNQQWKTELGFTLKIVGVTDLFLGSVMNRHGLDAASLARLPASKGAMAQLPGGTVDALNEAVIKDCGADIIAEATFTNPVDGEPATSFCRWALERGKHVVTTNKGPIALHGAELKALARCNNVAFEYEGSVMSGTPVIRLAKQALAGSSITGFEGILNGTSNFVLTAMEGGLGFAEAVSQAQALGYAEADPTADVEGHDVRLKVVILANELLDAKLTVNDVSCKGISALSLDDIEKARRDNARWKLIGAATRNADGSISASVEPRLLSNDHPLASISSATNAVSFTSELLGAVTVSGPGAGRTETAFALLSDIIHIHQSATRKQEHTL</sequence>
<dbReference type="EC" id="1.1.1.3" evidence="1"/>
<dbReference type="EMBL" id="JAEKIK010000007">
    <property type="protein sequence ID" value="MBJ2346999.1"/>
    <property type="molecule type" value="Genomic_DNA"/>
</dbReference>
<dbReference type="SMR" id="P0DXC5"/>
<dbReference type="GO" id="GO:0004412">
    <property type="term" value="F:homoserine dehydrogenase activity"/>
    <property type="evidence" value="ECO:0007669"/>
    <property type="project" value="InterPro"/>
</dbReference>
<dbReference type="GO" id="GO:0009088">
    <property type="term" value="P:threonine biosynthetic process"/>
    <property type="evidence" value="ECO:0007669"/>
    <property type="project" value="TreeGrafter"/>
</dbReference>
<dbReference type="FunFam" id="3.30.360.10:FF:000005">
    <property type="entry name" value="Homoserine dehydrogenase"/>
    <property type="match status" value="1"/>
</dbReference>
<dbReference type="Gene3D" id="3.30.360.10">
    <property type="entry name" value="Dihydrodipicolinate Reductase, domain 2"/>
    <property type="match status" value="1"/>
</dbReference>
<dbReference type="Gene3D" id="3.40.50.720">
    <property type="entry name" value="NAD(P)-binding Rossmann-like Domain"/>
    <property type="match status" value="1"/>
</dbReference>
<dbReference type="InterPro" id="IPR001342">
    <property type="entry name" value="HDH_cat"/>
</dbReference>
<dbReference type="InterPro" id="IPR019811">
    <property type="entry name" value="HDH_CS"/>
</dbReference>
<dbReference type="InterPro" id="IPR022697">
    <property type="entry name" value="HDH_short"/>
</dbReference>
<dbReference type="InterPro" id="IPR036291">
    <property type="entry name" value="NAD(P)-bd_dom_sf"/>
</dbReference>
<dbReference type="NCBIfam" id="NF004912">
    <property type="entry name" value="PRK06270.1"/>
    <property type="match status" value="1"/>
</dbReference>
<dbReference type="NCBIfam" id="NF004976">
    <property type="entry name" value="PRK06349.1"/>
    <property type="match status" value="1"/>
</dbReference>
<dbReference type="PANTHER" id="PTHR43331">
    <property type="entry name" value="HOMOSERINE DEHYDROGENASE"/>
    <property type="match status" value="1"/>
</dbReference>
<dbReference type="PANTHER" id="PTHR43331:SF1">
    <property type="entry name" value="HOMOSERINE DEHYDROGENASE"/>
    <property type="match status" value="1"/>
</dbReference>
<dbReference type="Pfam" id="PF00742">
    <property type="entry name" value="Homoserine_dh"/>
    <property type="match status" value="1"/>
</dbReference>
<dbReference type="PIRSF" id="PIRSF036497">
    <property type="entry name" value="HDH_short"/>
    <property type="match status" value="1"/>
</dbReference>
<dbReference type="SUPFAM" id="SSF55347">
    <property type="entry name" value="Glyceraldehyde-3-phosphate dehydrogenase-like, C-terminal domain"/>
    <property type="match status" value="1"/>
</dbReference>
<dbReference type="SUPFAM" id="SSF51735">
    <property type="entry name" value="NAD(P)-binding Rossmann-fold domains"/>
    <property type="match status" value="1"/>
</dbReference>
<dbReference type="PROSITE" id="PS01042">
    <property type="entry name" value="HOMOSER_DHGENASE"/>
    <property type="match status" value="1"/>
</dbReference>
<comment type="function">
    <text evidence="1">Dehydrogenase involved in the degradation of canavanine, the delta-oxa-analog of arginine, allowing growth on canavanine as sole nitrogen and carbon source (PubMed:36320885). Catalyzes the conversion of homoserine and NAD(+) to aspartate-semialdehyde and NADH (PubMed:36320885). Is highly specific for NAD(+) and cannot use NADP(+) (PubMed:36320885).</text>
</comment>
<comment type="catalytic activity">
    <reaction evidence="1">
        <text>L-homoserine + NAD(+) = L-aspartate 4-semialdehyde + NADH + H(+)</text>
        <dbReference type="Rhea" id="RHEA:15757"/>
        <dbReference type="ChEBI" id="CHEBI:15378"/>
        <dbReference type="ChEBI" id="CHEBI:57476"/>
        <dbReference type="ChEBI" id="CHEBI:57540"/>
        <dbReference type="ChEBI" id="CHEBI:57945"/>
        <dbReference type="ChEBI" id="CHEBI:537519"/>
        <dbReference type="EC" id="1.1.1.3"/>
    </reaction>
    <physiologicalReaction direction="left-to-right" evidence="1">
        <dbReference type="Rhea" id="RHEA:15758"/>
    </physiologicalReaction>
</comment>
<comment type="induction">
    <text evidence="1">Up-regulated upon growth on canavanine.</text>
</comment>
<comment type="similarity">
    <text evidence="2">Belongs to the homoserine dehydrogenase family.</text>
</comment>
<name>DHOM_PSECO</name>
<protein>
    <recommendedName>
        <fullName evidence="2">NAD(+)-dependent homoserine dehydrogenase</fullName>
        <shortName evidence="2">NAD(+)-dependent HSD</shortName>
        <ecNumber evidence="1">1.1.1.3</ecNumber>
    </recommendedName>
</protein>
<evidence type="ECO:0000269" key="1">
    <source>
    </source>
</evidence>
<evidence type="ECO:0000305" key="2"/>
<evidence type="ECO:0000312" key="3">
    <source>
        <dbReference type="EMBL" id="MBJ2346999.1"/>
    </source>
</evidence>
<gene>
    <name evidence="3" type="ORF">JFQ02_09240</name>
</gene>